<proteinExistence type="evidence at protein level"/>
<accession>P14941</accession>
<dbReference type="EC" id="1.1.1.80"/>
<dbReference type="EMBL" id="X64841">
    <property type="protein sequence ID" value="CAA46053.1"/>
    <property type="molecule type" value="Genomic_DNA"/>
</dbReference>
<dbReference type="PIR" id="A32973">
    <property type="entry name" value="A32973"/>
</dbReference>
<dbReference type="PDB" id="1BXZ">
    <property type="method" value="X-ray"/>
    <property type="resolution" value="2.99 A"/>
    <property type="chains" value="A/B/C/D=1-352"/>
</dbReference>
<dbReference type="PDB" id="1YKF">
    <property type="method" value="X-ray"/>
    <property type="resolution" value="2.50 A"/>
    <property type="chains" value="A/B/C/D=1-352"/>
</dbReference>
<dbReference type="PDB" id="2NVB">
    <property type="method" value="X-ray"/>
    <property type="resolution" value="2.80 A"/>
    <property type="chains" value="A/B/C/D=1-352"/>
</dbReference>
<dbReference type="PDB" id="3FPC">
    <property type="method" value="X-ray"/>
    <property type="resolution" value="1.40 A"/>
    <property type="chains" value="A/B/C/D=1-152, A/B/C/D=295-352"/>
</dbReference>
<dbReference type="PDB" id="3FPL">
    <property type="method" value="X-ray"/>
    <property type="resolution" value="1.90 A"/>
    <property type="chains" value="A=153-295"/>
</dbReference>
<dbReference type="PDB" id="3FSR">
    <property type="method" value="X-ray"/>
    <property type="resolution" value="2.20 A"/>
    <property type="chains" value="A/B/C/D=1-152, A/B/C/D=296-352"/>
</dbReference>
<dbReference type="PDB" id="3FTN">
    <property type="method" value="X-ray"/>
    <property type="resolution" value="2.19 A"/>
    <property type="chains" value="A/B/C/D=1-152, A/B/C/D=296-352"/>
</dbReference>
<dbReference type="PDB" id="6SDM">
    <property type="method" value="X-ray"/>
    <property type="resolution" value="2.85 A"/>
    <property type="chains" value="A/B/C/D=1-352"/>
</dbReference>
<dbReference type="PDB" id="7F3P">
    <property type="method" value="X-ray"/>
    <property type="resolution" value="2.60 A"/>
    <property type="chains" value="A/B/C/D=1-352"/>
</dbReference>
<dbReference type="PDB" id="7UTC">
    <property type="method" value="X-ray"/>
    <property type="resolution" value="1.85 A"/>
    <property type="chains" value="A/B/C/D=1-352"/>
</dbReference>
<dbReference type="PDB" id="7UUT">
    <property type="method" value="X-ray"/>
    <property type="resolution" value="1.89 A"/>
    <property type="chains" value="A/B/C/D=1-352"/>
</dbReference>
<dbReference type="PDB" id="7UX4">
    <property type="method" value="X-ray"/>
    <property type="resolution" value="2.23 A"/>
    <property type="chains" value="A/B/C/D=1-352"/>
</dbReference>
<dbReference type="PDB" id="7XL5">
    <property type="method" value="X-ray"/>
    <property type="resolution" value="2.60 A"/>
    <property type="chains" value="A/B/C/D=2-352"/>
</dbReference>
<dbReference type="PDB" id="7XY9">
    <property type="method" value="EM"/>
    <property type="resolution" value="2.12 A"/>
    <property type="chains" value="A/B/C/D=2-352"/>
</dbReference>
<dbReference type="PDBsum" id="1BXZ"/>
<dbReference type="PDBsum" id="1YKF"/>
<dbReference type="PDBsum" id="2NVB"/>
<dbReference type="PDBsum" id="3FPC"/>
<dbReference type="PDBsum" id="3FPL"/>
<dbReference type="PDBsum" id="3FSR"/>
<dbReference type="PDBsum" id="3FTN"/>
<dbReference type="PDBsum" id="6SDM"/>
<dbReference type="PDBsum" id="7F3P"/>
<dbReference type="PDBsum" id="7UTC"/>
<dbReference type="PDBsum" id="7UUT"/>
<dbReference type="PDBsum" id="7UX4"/>
<dbReference type="PDBsum" id="7XL5"/>
<dbReference type="PDBsum" id="7XY9"/>
<dbReference type="EMDB" id="EMD-33514"/>
<dbReference type="SMR" id="P14941"/>
<dbReference type="DrugBank" id="DB02606">
    <property type="generic name" value="2-Butanol"/>
</dbReference>
<dbReference type="DrugBank" id="DB03461">
    <property type="generic name" value="Nicotinamide adenine dinucleotide phosphate"/>
</dbReference>
<dbReference type="BRENDA" id="1.1.1.2">
    <property type="organism ID" value="1463"/>
</dbReference>
<dbReference type="BRENDA" id="1.1.1.80">
    <property type="organism ID" value="1463"/>
</dbReference>
<dbReference type="EvolutionaryTrace" id="P14941"/>
<dbReference type="GO" id="GO:0050009">
    <property type="term" value="F:isopropanol dehydrogenase (NADP+) activity"/>
    <property type="evidence" value="ECO:0007669"/>
    <property type="project" value="UniProtKB-EC"/>
</dbReference>
<dbReference type="GO" id="GO:0008270">
    <property type="term" value="F:zinc ion binding"/>
    <property type="evidence" value="ECO:0007669"/>
    <property type="project" value="InterPro"/>
</dbReference>
<dbReference type="CDD" id="cd08285">
    <property type="entry name" value="NADP_ADH"/>
    <property type="match status" value="1"/>
</dbReference>
<dbReference type="Gene3D" id="3.90.180.10">
    <property type="entry name" value="Medium-chain alcohol dehydrogenases, catalytic domain"/>
    <property type="match status" value="1"/>
</dbReference>
<dbReference type="Gene3D" id="3.40.50.720">
    <property type="entry name" value="NAD(P)-binding Rossmann-like Domain"/>
    <property type="match status" value="1"/>
</dbReference>
<dbReference type="InterPro" id="IPR013149">
    <property type="entry name" value="ADH-like_C"/>
</dbReference>
<dbReference type="InterPro" id="IPR013154">
    <property type="entry name" value="ADH-like_N"/>
</dbReference>
<dbReference type="InterPro" id="IPR002328">
    <property type="entry name" value="ADH_Zn_CS"/>
</dbReference>
<dbReference type="InterPro" id="IPR011032">
    <property type="entry name" value="GroES-like_sf"/>
</dbReference>
<dbReference type="InterPro" id="IPR036291">
    <property type="entry name" value="NAD(P)-bd_dom_sf"/>
</dbReference>
<dbReference type="InterPro" id="IPR020843">
    <property type="entry name" value="PKS_ER"/>
</dbReference>
<dbReference type="PANTHER" id="PTHR42813:SF4">
    <property type="entry name" value="NADP-DEPENDENT ISOPROPANOL DEHYDROGENASE"/>
    <property type="match status" value="1"/>
</dbReference>
<dbReference type="PANTHER" id="PTHR42813">
    <property type="entry name" value="ZINC-TYPE ALCOHOL DEHYDROGENASE-LIKE"/>
    <property type="match status" value="1"/>
</dbReference>
<dbReference type="Pfam" id="PF08240">
    <property type="entry name" value="ADH_N"/>
    <property type="match status" value="1"/>
</dbReference>
<dbReference type="Pfam" id="PF00107">
    <property type="entry name" value="ADH_zinc_N"/>
    <property type="match status" value="1"/>
</dbReference>
<dbReference type="SMART" id="SM00829">
    <property type="entry name" value="PKS_ER"/>
    <property type="match status" value="1"/>
</dbReference>
<dbReference type="SUPFAM" id="SSF50129">
    <property type="entry name" value="GroES-like"/>
    <property type="match status" value="1"/>
</dbReference>
<dbReference type="SUPFAM" id="SSF51735">
    <property type="entry name" value="NAD(P)-binding Rossmann-fold domains"/>
    <property type="match status" value="1"/>
</dbReference>
<dbReference type="PROSITE" id="PS00059">
    <property type="entry name" value="ADH_ZINC"/>
    <property type="match status" value="1"/>
</dbReference>
<gene>
    <name type="primary">adh</name>
</gene>
<protein>
    <recommendedName>
        <fullName>NADP-dependent isopropanol dehydrogenase</fullName>
        <ecNumber>1.1.1.80</ecNumber>
    </recommendedName>
</protein>
<evidence type="ECO:0000269" key="1">
    <source>
    </source>
</evidence>
<evidence type="ECO:0000269" key="2">
    <source>
    </source>
</evidence>
<evidence type="ECO:0000305" key="3"/>
<evidence type="ECO:0007829" key="4">
    <source>
        <dbReference type="PDB" id="3FPC"/>
    </source>
</evidence>
<evidence type="ECO:0007829" key="5">
    <source>
        <dbReference type="PDB" id="7F3P"/>
    </source>
</evidence>
<evidence type="ECO:0007829" key="6">
    <source>
        <dbReference type="PDB" id="7UTC"/>
    </source>
</evidence>
<keyword id="KW-0002">3D-structure</keyword>
<keyword id="KW-0903">Direct protein sequencing</keyword>
<keyword id="KW-0479">Metal-binding</keyword>
<keyword id="KW-0521">NADP</keyword>
<keyword id="KW-0560">Oxidoreductase</keyword>
<keyword id="KW-0862">Zinc</keyword>
<feature type="chain" id="PRO_0000160749" description="NADP-dependent isopropanol dehydrogenase">
    <location>
        <begin position="1"/>
        <end position="352"/>
    </location>
</feature>
<feature type="binding site" evidence="1 2">
    <location>
        <position position="37"/>
    </location>
    <ligand>
        <name>Zn(2+)</name>
        <dbReference type="ChEBI" id="CHEBI:29105"/>
        <note>catalytic</note>
    </ligand>
</feature>
<feature type="binding site" evidence="1 2">
    <location>
        <position position="59"/>
    </location>
    <ligand>
        <name>Zn(2+)</name>
        <dbReference type="ChEBI" id="CHEBI:29105"/>
        <note>catalytic</note>
    </ligand>
</feature>
<feature type="binding site" evidence="1 2">
    <location>
        <position position="150"/>
    </location>
    <ligand>
        <name>Zn(2+)</name>
        <dbReference type="ChEBI" id="CHEBI:29105"/>
        <note>catalytic</note>
    </ligand>
</feature>
<feature type="binding site" evidence="2">
    <location>
        <begin position="175"/>
        <end position="178"/>
    </location>
    <ligand>
        <name>NADP(+)</name>
        <dbReference type="ChEBI" id="CHEBI:58349"/>
    </ligand>
</feature>
<feature type="binding site" evidence="2">
    <location>
        <begin position="198"/>
        <end position="200"/>
    </location>
    <ligand>
        <name>NADP(+)</name>
        <dbReference type="ChEBI" id="CHEBI:58349"/>
    </ligand>
</feature>
<feature type="binding site" evidence="2">
    <location>
        <position position="218"/>
    </location>
    <ligand>
        <name>NADP(+)</name>
        <dbReference type="ChEBI" id="CHEBI:58349"/>
    </ligand>
</feature>
<feature type="binding site" evidence="2">
    <location>
        <begin position="265"/>
        <end position="267"/>
    </location>
    <ligand>
        <name>NADP(+)</name>
        <dbReference type="ChEBI" id="CHEBI:58349"/>
    </ligand>
</feature>
<feature type="binding site" evidence="2">
    <location>
        <position position="340"/>
    </location>
    <ligand>
        <name>NADP(+)</name>
        <dbReference type="ChEBI" id="CHEBI:58349"/>
    </ligand>
</feature>
<feature type="strand" evidence="4">
    <location>
        <begin position="2"/>
        <end position="8"/>
    </location>
</feature>
<feature type="strand" evidence="4">
    <location>
        <begin position="11"/>
        <end position="16"/>
    </location>
</feature>
<feature type="strand" evidence="4">
    <location>
        <begin position="27"/>
        <end position="35"/>
    </location>
</feature>
<feature type="helix" evidence="4">
    <location>
        <begin position="38"/>
        <end position="45"/>
    </location>
</feature>
<feature type="strand" evidence="4">
    <location>
        <begin position="53"/>
        <end position="56"/>
    </location>
</feature>
<feature type="strand" evidence="4">
    <location>
        <begin position="60"/>
        <end position="68"/>
    </location>
</feature>
<feature type="strand" evidence="4">
    <location>
        <begin position="80"/>
        <end position="83"/>
    </location>
</feature>
<feature type="strand" evidence="4">
    <location>
        <begin position="90"/>
        <end position="92"/>
    </location>
</feature>
<feature type="helix" evidence="4">
    <location>
        <begin position="93"/>
        <end position="96"/>
    </location>
</feature>
<feature type="helix" evidence="4">
    <location>
        <begin position="100"/>
        <end position="102"/>
    </location>
</feature>
<feature type="turn" evidence="4">
    <location>
        <begin position="106"/>
        <end position="109"/>
    </location>
</feature>
<feature type="turn" evidence="4">
    <location>
        <begin position="112"/>
        <end position="114"/>
    </location>
</feature>
<feature type="strand" evidence="4">
    <location>
        <begin position="119"/>
        <end position="122"/>
    </location>
</feature>
<feature type="strand" evidence="4">
    <location>
        <begin position="124"/>
        <end position="128"/>
    </location>
</feature>
<feature type="helix" evidence="4">
    <location>
        <begin position="129"/>
        <end position="132"/>
    </location>
</feature>
<feature type="strand" evidence="5">
    <location>
        <begin position="133"/>
        <end position="135"/>
    </location>
</feature>
<feature type="helix" evidence="4">
    <location>
        <begin position="142"/>
        <end position="145"/>
    </location>
</feature>
<feature type="turn" evidence="4">
    <location>
        <begin position="146"/>
        <end position="150"/>
    </location>
</feature>
<feature type="helix" evidence="4">
    <location>
        <begin position="151"/>
        <end position="161"/>
    </location>
</feature>
<feature type="strand" evidence="6">
    <location>
        <begin position="170"/>
        <end position="173"/>
    </location>
</feature>
<feature type="helix" evidence="6">
    <location>
        <begin position="177"/>
        <end position="188"/>
    </location>
</feature>
<feature type="strand" evidence="6">
    <location>
        <begin position="194"/>
        <end position="197"/>
    </location>
</feature>
<feature type="helix" evidence="6">
    <location>
        <begin position="201"/>
        <end position="209"/>
    </location>
</feature>
<feature type="strand" evidence="6">
    <location>
        <begin position="213"/>
        <end position="216"/>
    </location>
</feature>
<feature type="helix" evidence="6">
    <location>
        <begin position="218"/>
        <end position="220"/>
    </location>
</feature>
<feature type="helix" evidence="6">
    <location>
        <begin position="223"/>
        <end position="230"/>
    </location>
</feature>
<feature type="turn" evidence="6">
    <location>
        <begin position="231"/>
        <end position="233"/>
    </location>
</feature>
<feature type="strand" evidence="6">
    <location>
        <begin position="236"/>
        <end position="241"/>
    </location>
</feature>
<feature type="helix" evidence="6">
    <location>
        <begin position="248"/>
        <end position="255"/>
    </location>
</feature>
<feature type="strand" evidence="6">
    <location>
        <begin position="256"/>
        <end position="264"/>
    </location>
</feature>
<feature type="strand" evidence="6">
    <location>
        <begin position="272"/>
        <end position="277"/>
    </location>
</feature>
<feature type="turn" evidence="6">
    <location>
        <begin position="278"/>
        <end position="281"/>
    </location>
</feature>
<feature type="helix" evidence="6">
    <location>
        <begin position="282"/>
        <end position="284"/>
    </location>
</feature>
<feature type="strand" evidence="6">
    <location>
        <begin position="289"/>
        <end position="293"/>
    </location>
</feature>
<feature type="helix" evidence="4">
    <location>
        <begin position="298"/>
        <end position="310"/>
    </location>
</feature>
<feature type="helix" evidence="4">
    <location>
        <begin position="316"/>
        <end position="319"/>
    </location>
</feature>
<feature type="strand" evidence="4">
    <location>
        <begin position="320"/>
        <end position="326"/>
    </location>
</feature>
<feature type="helix" evidence="4">
    <location>
        <begin position="329"/>
        <end position="338"/>
    </location>
</feature>
<feature type="strand" evidence="4">
    <location>
        <begin position="345"/>
        <end position="350"/>
    </location>
</feature>
<name>ADH_THEBR</name>
<organism>
    <name type="scientific">Thermoanaerobacter brockii</name>
    <name type="common">Thermoanaerobium brockii</name>
    <dbReference type="NCBI Taxonomy" id="29323"/>
    <lineage>
        <taxon>Bacteria</taxon>
        <taxon>Bacillati</taxon>
        <taxon>Bacillota</taxon>
        <taxon>Clostridia</taxon>
        <taxon>Thermoanaerobacterales</taxon>
        <taxon>Thermoanaerobacteraceae</taxon>
        <taxon>Thermoanaerobacter</taxon>
    </lineage>
</organism>
<reference key="1">
    <citation type="journal article" date="1989" name="Biochemistry">
        <title>Amino acid sequence of alcohol dehydrogenase from the thermophilic bacterium Thermoanaerobium brockii.</title>
        <authorList>
            <person name="Peretz M."/>
            <person name="Burstein Y."/>
        </authorList>
    </citation>
    <scope>PROTEIN SEQUENCE</scope>
    <source>
        <strain>ATCC 53556 / DSM 1457 / HTD4</strain>
    </source>
</reference>
<reference key="2">
    <citation type="submission" date="1997-01" db="EMBL/GenBank/DDBJ databases">
        <authorList>
            <person name="Burstein Y."/>
        </authorList>
    </citation>
    <scope>NUCLEOTIDE SEQUENCE [GENOMIC DNA]</scope>
    <source>
        <strain>ATCC 53556 / DSM 1457 / HTD4</strain>
    </source>
</reference>
<reference key="3">
    <citation type="journal article" date="1998" name="J. Mol. Biol.">
        <title>NADP-dependent bacterial alcohol dehydrogenases: crystal structure, cofactor-binding and cofactor specificity of the ADHs of Clostridium beijerinckii and Thermoanaerobacter brockii.</title>
        <authorList>
            <person name="Korkhin Y."/>
            <person name="Kalb A.J."/>
            <person name="Peretz M."/>
            <person name="Bogin O."/>
            <person name="Burstein Y."/>
            <person name="Frolow F."/>
        </authorList>
    </citation>
    <scope>X-RAY CRYSTALLOGRAPHY (2.50 ANGSTROMS) IN COMPLEX WITH NADP AND ZINC</scope>
</reference>
<reference key="4">
    <citation type="journal article" date="2010" name="Biochemistry">
        <title>Biochemical and structural properties of chimeras constructed by exchange of cofactor-binding domains in alcohol dehydrogenases from thermophilic and mesophilic microorganisms.</title>
        <authorList>
            <person name="Goihberg E."/>
            <person name="Peretz M."/>
            <person name="Tel-Or S."/>
            <person name="Dym O."/>
            <person name="Shimon L."/>
            <person name="Frolow F."/>
            <person name="Burstein Y."/>
        </authorList>
    </citation>
    <scope>X-RAY CRYSTALLOGRAPHY (1.90 ANGSTROMS) OF 153-295 IN COMPLEX WITH ZINC</scope>
    <scope>FUNCTION</scope>
    <scope>SUBUNIT</scope>
    <scope>COFACTOR</scope>
    <scope>CATALYTIC ACTIVITY</scope>
</reference>
<comment type="function">
    <text evidence="1">Alcohol dehydrogenase with a preference for medium chain secondary alcohols, such as 2-butanol and isopropanol. Has very low activity with primary alcohols, such as ethanol. Under physiological conditions, the enzyme reduces aldehydes and 2-ketones to produce secondary alcohols. Is also active with acetaldehyde and propionaldehyde.</text>
</comment>
<comment type="catalytic activity">
    <reaction evidence="1">
        <text>propan-2-ol + NADP(+) = acetone + NADPH + H(+)</text>
        <dbReference type="Rhea" id="RHEA:21792"/>
        <dbReference type="ChEBI" id="CHEBI:15347"/>
        <dbReference type="ChEBI" id="CHEBI:15378"/>
        <dbReference type="ChEBI" id="CHEBI:17824"/>
        <dbReference type="ChEBI" id="CHEBI:57783"/>
        <dbReference type="ChEBI" id="CHEBI:58349"/>
        <dbReference type="EC" id="1.1.1.80"/>
    </reaction>
</comment>
<comment type="cofactor">
    <cofactor evidence="1">
        <name>Zn(2+)</name>
        <dbReference type="ChEBI" id="CHEBI:29105"/>
    </cofactor>
    <text evidence="1">Binds 1 zinc ion per subunit.</text>
</comment>
<comment type="subunit">
    <text evidence="1 2">Homotetramer.</text>
</comment>
<comment type="similarity">
    <text evidence="3">Belongs to the zinc-containing alcohol dehydrogenase family.</text>
</comment>
<sequence length="352" mass="37647">MKGFAMLSIGKVGWIEKEKPAPGPFDAIVRPLAVAPCTSDIHTVFEGAIGERHNMILGHEAVGEVVEVGSEVKDFKPGDRVVVPAITPDWRTSEVQRGYHQHSGGMLAGWKFSNVKDGVFGEFFHVNDADMNLAHLPKEIPLEAAVMIPDMMTTGFHGAELADIELGATVAVLGIGPVGLMAVAGAKLRGAGRIIAVGSRPVCVDAAKYYGATDIVNYKDGPIESQIMNLTEGKGVDAAIIAGGNADIMATAVKIVKPGGTIANVNYFGEGEVLPVPRLEWGCGMAHKTIKGGLCPGGRLRMERLIDLVFYKRVDPSKLVTHVFRGFDNIEKAFMLMKDKPKDLIKPVVILA</sequence>